<evidence type="ECO:0000255" key="1">
    <source>
        <dbReference type="HAMAP-Rule" id="MF_01821"/>
    </source>
</evidence>
<accession>B1IRB9</accession>
<reference key="1">
    <citation type="submission" date="2008-02" db="EMBL/GenBank/DDBJ databases">
        <title>Complete sequence of Escherichia coli C str. ATCC 8739.</title>
        <authorList>
            <person name="Copeland A."/>
            <person name="Lucas S."/>
            <person name="Lapidus A."/>
            <person name="Glavina del Rio T."/>
            <person name="Dalin E."/>
            <person name="Tice H."/>
            <person name="Bruce D."/>
            <person name="Goodwin L."/>
            <person name="Pitluck S."/>
            <person name="Kiss H."/>
            <person name="Brettin T."/>
            <person name="Detter J.C."/>
            <person name="Han C."/>
            <person name="Kuske C.R."/>
            <person name="Schmutz J."/>
            <person name="Larimer F."/>
            <person name="Land M."/>
            <person name="Hauser L."/>
            <person name="Kyrpides N."/>
            <person name="Mikhailova N."/>
            <person name="Ingram L."/>
            <person name="Richardson P."/>
        </authorList>
    </citation>
    <scope>NUCLEOTIDE SEQUENCE [LARGE SCALE GENOMIC DNA]</scope>
    <source>
        <strain>ATCC 8739 / DSM 1576 / NBRC 3972 / NCIMB 8545 / WDCM 00012 / Crooks</strain>
    </source>
</reference>
<comment type="function">
    <text evidence="1">Transcription regulator that activates transcription by stimulating RNA polymerase (RNAP) recycling in case of stress conditions such as supercoiled DNA or high salt concentrations. Probably acts by releasing the RNAP, when it is trapped or immobilized on tightly supercoiled DNA. Does not activate transcription on linear DNA. Probably not involved in DNA repair.</text>
</comment>
<comment type="subunit">
    <text evidence="1">Interacts with the RNAP. Has a higher affinity for the core RNAP than for the holoenzyme. Its ATPase activity is stimulated by binding to RNAP.</text>
</comment>
<comment type="similarity">
    <text evidence="1">Belongs to the SNF2/RAD54 helicase family. RapA subfamily.</text>
</comment>
<organism>
    <name type="scientific">Escherichia coli (strain ATCC 8739 / DSM 1576 / NBRC 3972 / NCIMB 8545 / WDCM 00012 / Crooks)</name>
    <dbReference type="NCBI Taxonomy" id="481805"/>
    <lineage>
        <taxon>Bacteria</taxon>
        <taxon>Pseudomonadati</taxon>
        <taxon>Pseudomonadota</taxon>
        <taxon>Gammaproteobacteria</taxon>
        <taxon>Enterobacterales</taxon>
        <taxon>Enterobacteriaceae</taxon>
        <taxon>Escherichia</taxon>
    </lineage>
</organism>
<gene>
    <name evidence="1" type="primary">rapA</name>
    <name type="ordered locus">EcolC_3598</name>
</gene>
<keyword id="KW-0010">Activator</keyword>
<keyword id="KW-0067">ATP-binding</keyword>
<keyword id="KW-0238">DNA-binding</keyword>
<keyword id="KW-0347">Helicase</keyword>
<keyword id="KW-0378">Hydrolase</keyword>
<keyword id="KW-0547">Nucleotide-binding</keyword>
<keyword id="KW-0804">Transcription</keyword>
<keyword id="KW-0805">Transcription regulation</keyword>
<proteinExistence type="inferred from homology"/>
<feature type="chain" id="PRO_1000088355" description="RNA polymerase-associated protein RapA">
    <location>
        <begin position="1"/>
        <end position="968"/>
    </location>
</feature>
<feature type="domain" description="Helicase ATP-binding" evidence="1">
    <location>
        <begin position="164"/>
        <end position="334"/>
    </location>
</feature>
<feature type="domain" description="Helicase C-terminal" evidence="1">
    <location>
        <begin position="490"/>
        <end position="662"/>
    </location>
</feature>
<feature type="short sequence motif" description="DEAH box">
    <location>
        <begin position="280"/>
        <end position="283"/>
    </location>
</feature>
<feature type="binding site" evidence="1">
    <location>
        <begin position="177"/>
        <end position="184"/>
    </location>
    <ligand>
        <name>ATP</name>
        <dbReference type="ChEBI" id="CHEBI:30616"/>
    </ligand>
</feature>
<dbReference type="EC" id="3.6.4.-" evidence="1"/>
<dbReference type="EMBL" id="CP000946">
    <property type="protein sequence ID" value="ACA79212.1"/>
    <property type="molecule type" value="Genomic_DNA"/>
</dbReference>
<dbReference type="RefSeq" id="WP_001117011.1">
    <property type="nucleotide sequence ID" value="NZ_MTFT01000035.1"/>
</dbReference>
<dbReference type="SMR" id="B1IRB9"/>
<dbReference type="GeneID" id="75202125"/>
<dbReference type="KEGG" id="ecl:EcolC_3598"/>
<dbReference type="HOGENOM" id="CLU_011520_0_0_6"/>
<dbReference type="GO" id="GO:0005524">
    <property type="term" value="F:ATP binding"/>
    <property type="evidence" value="ECO:0007669"/>
    <property type="project" value="UniProtKB-UniRule"/>
</dbReference>
<dbReference type="GO" id="GO:0003677">
    <property type="term" value="F:DNA binding"/>
    <property type="evidence" value="ECO:0007669"/>
    <property type="project" value="UniProtKB-KW"/>
</dbReference>
<dbReference type="GO" id="GO:0004386">
    <property type="term" value="F:helicase activity"/>
    <property type="evidence" value="ECO:0007669"/>
    <property type="project" value="UniProtKB-UniRule"/>
</dbReference>
<dbReference type="GO" id="GO:0016817">
    <property type="term" value="F:hydrolase activity, acting on acid anhydrides"/>
    <property type="evidence" value="ECO:0007669"/>
    <property type="project" value="InterPro"/>
</dbReference>
<dbReference type="GO" id="GO:0006355">
    <property type="term" value="P:regulation of DNA-templated transcription"/>
    <property type="evidence" value="ECO:0007669"/>
    <property type="project" value="UniProtKB-UniRule"/>
</dbReference>
<dbReference type="CDD" id="cd18011">
    <property type="entry name" value="DEXDc_RapA"/>
    <property type="match status" value="1"/>
</dbReference>
<dbReference type="CDD" id="cd18793">
    <property type="entry name" value="SF2_C_SNF"/>
    <property type="match status" value="1"/>
</dbReference>
<dbReference type="FunFam" id="2.30.30.140:FF:000020">
    <property type="entry name" value="RNA polymerase-associated protein RapA"/>
    <property type="match status" value="1"/>
</dbReference>
<dbReference type="FunFam" id="2.30.30.930:FF:000001">
    <property type="entry name" value="RNA polymerase-associated protein RapA"/>
    <property type="match status" value="1"/>
</dbReference>
<dbReference type="FunFam" id="3.30.360.80:FF:000001">
    <property type="entry name" value="RNA polymerase-associated protein RapA"/>
    <property type="match status" value="1"/>
</dbReference>
<dbReference type="FunFam" id="3.40.50.10810:FF:000012">
    <property type="entry name" value="RNA polymerase-associated protein RapA"/>
    <property type="match status" value="1"/>
</dbReference>
<dbReference type="FunFam" id="3.40.50.300:FF:000350">
    <property type="entry name" value="RNA polymerase-associated protein RapA"/>
    <property type="match status" value="1"/>
</dbReference>
<dbReference type="Gene3D" id="2.30.30.140">
    <property type="match status" value="1"/>
</dbReference>
<dbReference type="Gene3D" id="2.30.30.930">
    <property type="match status" value="1"/>
</dbReference>
<dbReference type="Gene3D" id="3.30.360.80">
    <property type="match status" value="1"/>
</dbReference>
<dbReference type="Gene3D" id="6.10.140.1500">
    <property type="match status" value="1"/>
</dbReference>
<dbReference type="Gene3D" id="6.10.140.2230">
    <property type="match status" value="1"/>
</dbReference>
<dbReference type="Gene3D" id="3.40.50.300">
    <property type="entry name" value="P-loop containing nucleotide triphosphate hydrolases"/>
    <property type="match status" value="1"/>
</dbReference>
<dbReference type="Gene3D" id="3.40.50.10810">
    <property type="entry name" value="Tandem AAA-ATPase domain"/>
    <property type="match status" value="1"/>
</dbReference>
<dbReference type="HAMAP" id="MF_01821">
    <property type="entry name" value="Helicase_RapA"/>
    <property type="match status" value="1"/>
</dbReference>
<dbReference type="InterPro" id="IPR014001">
    <property type="entry name" value="Helicase_ATP-bd"/>
</dbReference>
<dbReference type="InterPro" id="IPR001650">
    <property type="entry name" value="Helicase_C-like"/>
</dbReference>
<dbReference type="InterPro" id="IPR023949">
    <property type="entry name" value="Helicase_RapA"/>
</dbReference>
<dbReference type="InterPro" id="IPR027417">
    <property type="entry name" value="P-loop_NTPase"/>
</dbReference>
<dbReference type="InterPro" id="IPR022737">
    <property type="entry name" value="RapA_C"/>
</dbReference>
<dbReference type="InterPro" id="IPR038718">
    <property type="entry name" value="SNF2-like_sf"/>
</dbReference>
<dbReference type="InterPro" id="IPR049730">
    <property type="entry name" value="SNF2/RAD54-like_C"/>
</dbReference>
<dbReference type="InterPro" id="IPR000330">
    <property type="entry name" value="SNF2_N"/>
</dbReference>
<dbReference type="InterPro" id="IPR040765">
    <property type="entry name" value="Tudor_1_RapA"/>
</dbReference>
<dbReference type="InterPro" id="IPR040766">
    <property type="entry name" value="Tudor_2_RapA"/>
</dbReference>
<dbReference type="NCBIfam" id="NF003426">
    <property type="entry name" value="PRK04914.1"/>
    <property type="match status" value="1"/>
</dbReference>
<dbReference type="PANTHER" id="PTHR45766">
    <property type="entry name" value="DNA ANNEALING HELICASE AND ENDONUCLEASE ZRANB3 FAMILY MEMBER"/>
    <property type="match status" value="1"/>
</dbReference>
<dbReference type="PANTHER" id="PTHR45766:SF6">
    <property type="entry name" value="SWI_SNF-RELATED MATRIX-ASSOCIATED ACTIN-DEPENDENT REGULATOR OF CHROMATIN SUBFAMILY A-LIKE PROTEIN 1"/>
    <property type="match status" value="1"/>
</dbReference>
<dbReference type="Pfam" id="PF00271">
    <property type="entry name" value="Helicase_C"/>
    <property type="match status" value="1"/>
</dbReference>
<dbReference type="Pfam" id="PF12137">
    <property type="entry name" value="RapA_C"/>
    <property type="match status" value="1"/>
</dbReference>
<dbReference type="Pfam" id="PF00176">
    <property type="entry name" value="SNF2-rel_dom"/>
    <property type="match status" value="1"/>
</dbReference>
<dbReference type="Pfam" id="PF18339">
    <property type="entry name" value="Tudor_1_RapA"/>
    <property type="match status" value="1"/>
</dbReference>
<dbReference type="Pfam" id="PF18337">
    <property type="entry name" value="Tudor_RapA"/>
    <property type="match status" value="1"/>
</dbReference>
<dbReference type="SMART" id="SM00487">
    <property type="entry name" value="DEXDc"/>
    <property type="match status" value="1"/>
</dbReference>
<dbReference type="SMART" id="SM00490">
    <property type="entry name" value="HELICc"/>
    <property type="match status" value="1"/>
</dbReference>
<dbReference type="SUPFAM" id="SSF52540">
    <property type="entry name" value="P-loop containing nucleoside triphosphate hydrolases"/>
    <property type="match status" value="2"/>
</dbReference>
<dbReference type="PROSITE" id="PS51192">
    <property type="entry name" value="HELICASE_ATP_BIND_1"/>
    <property type="match status" value="1"/>
</dbReference>
<dbReference type="PROSITE" id="PS51194">
    <property type="entry name" value="HELICASE_CTER"/>
    <property type="match status" value="1"/>
</dbReference>
<sequence>MPFTLGQRWISDTESELGLGTVVAVDARTVTLLFPSTGENRLYARSDSPVTRVMFNPGDTITSHDGWQMQVEEVKEENGLLTYIGTRLDTEESGVALREVFLDSKLVFSKPQDRLFAGQIDRMDRFALRYRARKYSSEQFRMPYSGLRGQRTSLIPHQLNIAHDVGRRHAPRVLLADEVGLGKTIEAGMILHQQLLSGAAERVLIIVPETLQHQWLVEMLRRFNLRFALFDDERYAEAQHDAYNPFDTEQLVICSLDFARRSKQRLEHLCEAEWDLLVVDEAHHLVWSEDAPSREYQAIEQLAEHVPGVLLLTATPEQLGMESHFARLRLLDPNRFHDFAQFVEEQKNYRPVADAVAMLLAGNKLSNDELNMLGEMIGEQDIEPLLQAANSDSEDAQSARQELVSMLMDRHGTSRVLFRNTRNGVKGFPKRELHTIKLPLPTQYQTAIKVSGIMGARKSAEDRARDMLYPERIYQEFEGDNATWWNFDPRVEWLMGYLTSHRSQKVLVICAKAATALQLEQVLREREGIRAAVFHEGMSIIERDRAAAWFAEEDTGAQVLLCSEIGSEGRNFQFASHMVMFDLPFNPDLLEQRIGRLDRIGQAHDIQIHVPYLEKTAQSVLVRWYHEGLDAFEHTCPTGRTIYDSVYNDLINYLASPDQTEGFDDLIKNCREQHEALKAQLEQGRDRLLEIHSNGGEKAQALAESIEEQDDDTNLIAFAMNLFDIIGINQDDRGDNMIVLTPSDHMLVPDFPGLSEDGITITFDREVALAREDAQFITWEHPLIRNGLDLILSGDTGSSTISLLKNKALPVGTLLVELIYVVEAQAPKQLQLNRFLPPTPVRMLLDKNGNNLAAQVEFETFNRQLNAVNRHTGSKLVNAVQQDVHAILQLGEAQIEKSARALIDAARNEADEKLSAELSRLEALRAVNPNIRDDELTAIESNRQQVMESLDQAGWRLDALRLIVVTHQ</sequence>
<protein>
    <recommendedName>
        <fullName evidence="1">RNA polymerase-associated protein RapA</fullName>
        <ecNumber evidence="1">3.6.4.-</ecNumber>
    </recommendedName>
    <alternativeName>
        <fullName evidence="1">ATP-dependent helicase HepA</fullName>
    </alternativeName>
</protein>
<name>RAPA_ECOLC</name>